<comment type="function">
    <text evidence="1 4 6">Binds to bile acids and is involved in enterohepatic bile acid metabolism. Required for efficient apical to basolateral transport of conjugated bile acids in ileal enterocytes (By similarity). Stimulates gastric acid and pepsinogen secretion (By similarity).</text>
</comment>
<comment type="subcellular location">
    <subcellularLocation>
        <location evidence="5 6">Cytoplasm</location>
    </subcellularLocation>
    <subcellularLocation>
        <location>Membrane</location>
        <topology evidence="2">Peripheral membrane protein</topology>
        <orientation evidence="2">Cytoplasmic side</orientation>
    </subcellularLocation>
</comment>
<comment type="tissue specificity">
    <text evidence="5 6">Predominantly expressed in ileum; also expressed in ovary.</text>
</comment>
<comment type="domain">
    <text evidence="1 3">Forms a beta-barrel structure that accommodates hydrophobic ligands in its interior. Can bind at least two ligands per molecule, however, the stoichiometry is debated.</text>
</comment>
<comment type="similarity">
    <text evidence="7">Belongs to the calycin superfamily. Fatty-acid binding protein (FABP) family.</text>
</comment>
<feature type="initiator methionine" description="Removed" evidence="5">
    <location>
        <position position="1"/>
    </location>
</feature>
<feature type="chain" id="PRO_0000067384" description="Gastrotropin">
    <location>
        <begin position="2"/>
        <end position="128"/>
    </location>
</feature>
<feature type="modified residue" description="N-acetylalanine" evidence="5">
    <location>
        <position position="2"/>
    </location>
</feature>
<feature type="sequence conflict" description="In Ref. 3; AA sequence." evidence="7" ref="3">
    <original>DE</original>
    <variation>ED</variation>
    <location>
        <begin position="16"/>
        <end position="17"/>
    </location>
</feature>
<feature type="sequence conflict" description="In Ref. 2; AAB24948/AAA57155." evidence="7" ref="2">
    <original>DE</original>
    <variation>ED</variation>
    <location>
        <begin position="26"/>
        <end position="27"/>
    </location>
</feature>
<feature type="sequence conflict" description="In Ref. 4; AA sequence." evidence="7" ref="4">
    <original>DE</original>
    <variation>GD</variation>
    <location>
        <begin position="26"/>
        <end position="27"/>
    </location>
</feature>
<proteinExistence type="evidence at protein level"/>
<organism>
    <name type="scientific">Rattus norvegicus</name>
    <name type="common">Rat</name>
    <dbReference type="NCBI Taxonomy" id="10116"/>
    <lineage>
        <taxon>Eukaryota</taxon>
        <taxon>Metazoa</taxon>
        <taxon>Chordata</taxon>
        <taxon>Craniata</taxon>
        <taxon>Vertebrata</taxon>
        <taxon>Euteleostomi</taxon>
        <taxon>Mammalia</taxon>
        <taxon>Eutheria</taxon>
        <taxon>Euarchontoglires</taxon>
        <taxon>Glires</taxon>
        <taxon>Rodentia</taxon>
        <taxon>Myomorpha</taxon>
        <taxon>Muroidea</taxon>
        <taxon>Muridae</taxon>
        <taxon>Murinae</taxon>
        <taxon>Rattus</taxon>
    </lineage>
</organism>
<reference key="1">
    <citation type="journal article" date="1993" name="Biochem. Biophys. Res. Commun.">
        <title>Cloning of a cDNA encoding rat intestinal 15 kDa protein and its tissue distribution.</title>
        <authorList>
            <person name="Fujii H."/>
            <person name="Nomura M."/>
            <person name="Kanda T."/>
            <person name="Amano O."/>
            <person name="Iseki S."/>
            <person name="Hatakeyama K."/>
            <person name="Ono T."/>
        </authorList>
    </citation>
    <scope>NUCLEOTIDE SEQUENCE [MRNA]</scope>
</reference>
<reference key="2">
    <citation type="journal article" date="1994" name="Proc. Natl. Acad. Sci. U.S.A.">
        <title>Molecular cloning, tissue distribution, and expression of a 14-kDa bile acid-binding protein from rat ileal cytosol.</title>
        <authorList>
            <person name="Gong Y.Z."/>
            <person name="Everett E.T."/>
            <person name="Schwartz D.A."/>
            <person name="Norris J.S."/>
            <person name="Wilson F.A."/>
        </authorList>
    </citation>
    <scope>NUCLEOTIDE SEQUENCE [MRNA]</scope>
    <scope>BILE ACID-BINDING</scope>
    <scope>SUBCELLULAR LOCATION</scope>
    <scope>TISSUE SPECIFICITY</scope>
    <source>
        <strain>Sprague-Dawley</strain>
        <tissue>Ileum</tissue>
    </source>
</reference>
<reference key="3">
    <citation type="journal article" date="1991" name="Eur. J. Biochem.">
        <title>Primary structure of a 15-kDa protein from rat intestinal epithelium. Sequence similarity to fatty-acid-binding proteins.</title>
        <authorList>
            <person name="Kanda T."/>
            <person name="Odani S."/>
            <person name="Tomoi M."/>
            <person name="Matsubara Y."/>
            <person name="Ono T."/>
        </authorList>
    </citation>
    <scope>PROTEIN SEQUENCE OF 2-128</scope>
    <scope>CLEAVAGE OF INITIATOR METHIONINE</scope>
    <scope>ACETYLATION AT ALA-2</scope>
    <scope>SUBCELLULAR LOCATION</scope>
    <scope>TISSUE SPECIFICITY</scope>
    <source>
        <strain>Sprague-Dawley</strain>
        <tissue>Intestinal mucosa</tissue>
    </source>
</reference>
<reference key="4">
    <citation type="journal article" date="1991" name="Biochem. Biophys. Res. Commun.">
        <title>Identification of the 14 kDa bile acid transport protein of rat ileal cytosol as gastrotropin.</title>
        <authorList>
            <person name="Vodenlich A.D. Jr."/>
            <person name="Gong Y.-Z."/>
            <person name="Geoghegan K.F."/>
            <person name="Lin M.C."/>
            <person name="Lanzetti A.J."/>
            <person name="Wilson F.A."/>
        </authorList>
    </citation>
    <scope>PROTEIN SEQUENCE OF 21-31; 88-103 AND 109-128</scope>
    <source>
        <tissue>Ileum</tissue>
    </source>
</reference>
<dbReference type="EMBL" id="S52878">
    <property type="protein sequence ID" value="AAB24948.1"/>
    <property type="molecule type" value="mRNA"/>
</dbReference>
<dbReference type="EMBL" id="L22788">
    <property type="protein sequence ID" value="AAA57155.1"/>
    <property type="molecule type" value="mRNA"/>
</dbReference>
<dbReference type="PIR" id="JC1413">
    <property type="entry name" value="JC1413"/>
</dbReference>
<dbReference type="RefSeq" id="NP_058794.1">
    <property type="nucleotide sequence ID" value="NM_017098.1"/>
</dbReference>
<dbReference type="SMR" id="P80020"/>
<dbReference type="FunCoup" id="P80020">
    <property type="interactions" value="79"/>
</dbReference>
<dbReference type="STRING" id="10116.ENSRNOP00000005205"/>
<dbReference type="iPTMnet" id="P80020"/>
<dbReference type="PhosphoSitePlus" id="P80020"/>
<dbReference type="PaxDb" id="10116-ENSRNOP00000005205"/>
<dbReference type="GeneID" id="25440"/>
<dbReference type="KEGG" id="rno:25440"/>
<dbReference type="UCSC" id="RGD:2592">
    <property type="organism name" value="rat"/>
</dbReference>
<dbReference type="AGR" id="RGD:2592"/>
<dbReference type="CTD" id="2172"/>
<dbReference type="RGD" id="2592">
    <property type="gene designation" value="Fabp6"/>
</dbReference>
<dbReference type="eggNOG" id="KOG4015">
    <property type="taxonomic scope" value="Eukaryota"/>
</dbReference>
<dbReference type="InParanoid" id="P80020"/>
<dbReference type="PhylomeDB" id="P80020"/>
<dbReference type="Reactome" id="R-RNO-159418">
    <property type="pathway name" value="Recycling of bile acids and salts"/>
</dbReference>
<dbReference type="Reactome" id="R-RNO-163560">
    <property type="pathway name" value="Triglyceride catabolism"/>
</dbReference>
<dbReference type="PRO" id="PR:P80020"/>
<dbReference type="Proteomes" id="UP000002494">
    <property type="component" value="Unplaced"/>
</dbReference>
<dbReference type="GO" id="GO:0005829">
    <property type="term" value="C:cytosol"/>
    <property type="evidence" value="ECO:0000318"/>
    <property type="project" value="GO_Central"/>
</dbReference>
<dbReference type="GO" id="GO:0016020">
    <property type="term" value="C:membrane"/>
    <property type="evidence" value="ECO:0007669"/>
    <property type="project" value="UniProtKB-SubCell"/>
</dbReference>
<dbReference type="GO" id="GO:0005634">
    <property type="term" value="C:nucleus"/>
    <property type="evidence" value="ECO:0000318"/>
    <property type="project" value="GO_Central"/>
</dbReference>
<dbReference type="GO" id="GO:0005504">
    <property type="term" value="F:fatty acid binding"/>
    <property type="evidence" value="ECO:0000314"/>
    <property type="project" value="RGD"/>
</dbReference>
<dbReference type="GO" id="GO:0015908">
    <property type="term" value="P:fatty acid transport"/>
    <property type="evidence" value="ECO:0000318"/>
    <property type="project" value="GO_Central"/>
</dbReference>
<dbReference type="GO" id="GO:0008202">
    <property type="term" value="P:steroid metabolic process"/>
    <property type="evidence" value="ECO:0000270"/>
    <property type="project" value="RGD"/>
</dbReference>
<dbReference type="FunFam" id="2.40.128.20:FF:000006">
    <property type="entry name" value="Fatty acid-binding protein, liver"/>
    <property type="match status" value="1"/>
</dbReference>
<dbReference type="Gene3D" id="2.40.128.20">
    <property type="match status" value="1"/>
</dbReference>
<dbReference type="InterPro" id="IPR012674">
    <property type="entry name" value="Calycin"/>
</dbReference>
<dbReference type="InterPro" id="IPR000463">
    <property type="entry name" value="Fatty_acid-bd"/>
</dbReference>
<dbReference type="InterPro" id="IPR031259">
    <property type="entry name" value="ILBP"/>
</dbReference>
<dbReference type="PANTHER" id="PTHR11955">
    <property type="entry name" value="FATTY ACID BINDING PROTEIN"/>
    <property type="match status" value="1"/>
</dbReference>
<dbReference type="Pfam" id="PF14651">
    <property type="entry name" value="Lipocalin_7"/>
    <property type="match status" value="1"/>
</dbReference>
<dbReference type="PRINTS" id="PR00178">
    <property type="entry name" value="FATTYACIDBP"/>
</dbReference>
<dbReference type="SUPFAM" id="SSF50814">
    <property type="entry name" value="Lipocalins"/>
    <property type="match status" value="1"/>
</dbReference>
<dbReference type="PROSITE" id="PS00214">
    <property type="entry name" value="FABP"/>
    <property type="match status" value="1"/>
</dbReference>
<sequence length="128" mass="14544">MAFTGKYEFESEKNYDEFMKRLGLPDEVIERGRNFKIITEVQQDGENFTWSQSYSGGNIMSNKFTIGKECEMQTMGGKKFKATVKMEGGKVVADFPNYHQTSEVVGDKLVEISTIGDVTYERVSKRVA</sequence>
<name>FABP6_RAT</name>
<protein>
    <recommendedName>
        <fullName>Gastrotropin</fullName>
        <shortName>GT</shortName>
    </recommendedName>
    <alternativeName>
        <fullName>14 kDa bile acid-binding protein</fullName>
    </alternativeName>
    <alternativeName>
        <fullName>Fatty acid-binding protein 6</fullName>
    </alternativeName>
    <alternativeName>
        <fullName>I-BABP</fullName>
    </alternativeName>
    <alternativeName>
        <fullName>Ileal lipid-binding protein</fullName>
        <shortName>ILBP</shortName>
    </alternativeName>
    <alternativeName>
        <fullName>Intestinal 15 kDa protein</fullName>
        <shortName>I-15P</shortName>
    </alternativeName>
</protein>
<evidence type="ECO:0000250" key="1">
    <source>
        <dbReference type="UniProtKB" id="P10289"/>
    </source>
</evidence>
<evidence type="ECO:0000250" key="2">
    <source>
        <dbReference type="UniProtKB" id="P50119"/>
    </source>
</evidence>
<evidence type="ECO:0000250" key="3">
    <source>
        <dbReference type="UniProtKB" id="P51161"/>
    </source>
</evidence>
<evidence type="ECO:0000250" key="4">
    <source>
        <dbReference type="UniProtKB" id="P51162"/>
    </source>
</evidence>
<evidence type="ECO:0000269" key="5">
    <source>
    </source>
</evidence>
<evidence type="ECO:0000269" key="6">
    <source>
    </source>
</evidence>
<evidence type="ECO:0000305" key="7"/>
<accession>P80020</accession>
<keyword id="KW-0007">Acetylation</keyword>
<keyword id="KW-0963">Cytoplasm</keyword>
<keyword id="KW-0903">Direct protein sequencing</keyword>
<keyword id="KW-0445">Lipid transport</keyword>
<keyword id="KW-0446">Lipid-binding</keyword>
<keyword id="KW-0472">Membrane</keyword>
<keyword id="KW-1185">Reference proteome</keyword>
<keyword id="KW-0813">Transport</keyword>
<gene>
    <name type="primary">Fabp6</name>
    <name type="synonym">Ilbp</name>
    <name type="synonym">Illbp</name>
</gene>